<proteinExistence type="evidence at protein level"/>
<sequence>MGRTVVVLGGGISGLAASYYLSRAPCPPKVVLVEGSERLGGWIRSVRGPDGAIFELGPRGIRPAGALGARTLLLVSELGLDSEVLPVRGDHPAAQNRFLYVGGALHALPSGIRGLLRPSPPFSKPLFWAGLRDLTTPRGKDPDETVHSFAQRRLGPEVASLAMDSLCRGVFAGNSRELSIRSCFPSLFQAEQTHRSILLGLLLGAGRGPQLDSALIRQAQAERWSQWSLRGGLETLPQALHAHLTSRGVSVLQGQPVCGLSLQAEGRWKVSLEDSSLEADHIISAIPASVLSKLLPAEATPLARALSTITAVSVAVVNLQYRGARLPVQGFGHLVPSSEDPVILGIVYDSVAFPEQDGSLPGLRLTVMLGGSWLQTLEARGCVLSQELLQQEAEKAAATQLGLNEPPSHCLVHLHKNSIPQYTLGHWQKLESAAQFLAAQKLPLTLAGASYEGVAVNDCIESGRQAAARVLGTEPNS</sequence>
<evidence type="ECO:0000250" key="1">
    <source>
        <dbReference type="UniProtKB" id="P50336"/>
    </source>
</evidence>
<evidence type="ECO:0000250" key="2">
    <source>
        <dbReference type="UniProtKB" id="P51175"/>
    </source>
</evidence>
<evidence type="ECO:0000269" key="3">
    <source>
    </source>
</evidence>
<evidence type="ECO:0000305" key="4"/>
<feature type="chain" id="PRO_0000135269" description="Protoporphyrinogen oxidase">
    <location>
        <begin position="1"/>
        <end position="477"/>
    </location>
</feature>
<feature type="binding site" evidence="1">
    <location>
        <begin position="9"/>
        <end position="14"/>
    </location>
    <ligand>
        <name>FAD</name>
        <dbReference type="ChEBI" id="CHEBI:57692"/>
    </ligand>
</feature>
<feature type="binding site" evidence="1">
    <location>
        <position position="42"/>
    </location>
    <ligand>
        <name>FAD</name>
        <dbReference type="ChEBI" id="CHEBI:57692"/>
    </ligand>
</feature>
<feature type="binding site" evidence="1">
    <location>
        <begin position="57"/>
        <end position="60"/>
    </location>
    <ligand>
        <name>FAD</name>
        <dbReference type="ChEBI" id="CHEBI:57692"/>
    </ligand>
</feature>
<feature type="binding site" evidence="1">
    <location>
        <position position="257"/>
    </location>
    <ligand>
        <name>FAD</name>
        <dbReference type="ChEBI" id="CHEBI:57692"/>
    </ligand>
</feature>
<feature type="binding site" evidence="1">
    <location>
        <position position="449"/>
    </location>
    <ligand>
        <name>FAD</name>
        <dbReference type="ChEBI" id="CHEBI:57692"/>
    </ligand>
</feature>
<feature type="binding site" evidence="1">
    <location>
        <begin position="454"/>
        <end position="456"/>
    </location>
    <ligand>
        <name>FAD</name>
        <dbReference type="ChEBI" id="CHEBI:57692"/>
    </ligand>
</feature>
<dbReference type="EC" id="1.3.3.4"/>
<dbReference type="EMBL" id="DAAA02006959">
    <property type="status" value="NOT_ANNOTATED_CDS"/>
    <property type="molecule type" value="Genomic_DNA"/>
</dbReference>
<dbReference type="PIR" id="S65629">
    <property type="entry name" value="S65629"/>
</dbReference>
<dbReference type="RefSeq" id="NP_001179355.1">
    <property type="nucleotide sequence ID" value="NM_001192426.1"/>
</dbReference>
<dbReference type="RefSeq" id="XP_005203553.1">
    <property type="nucleotide sequence ID" value="XM_005203496.4"/>
</dbReference>
<dbReference type="RefSeq" id="XP_005203554.1">
    <property type="nucleotide sequence ID" value="XM_005203497.5"/>
</dbReference>
<dbReference type="SMR" id="P56602"/>
<dbReference type="FunCoup" id="P56602">
    <property type="interactions" value="2620"/>
</dbReference>
<dbReference type="STRING" id="9913.ENSBTAP00000053328"/>
<dbReference type="PaxDb" id="9913-ENSBTAP00000053328"/>
<dbReference type="Ensembl" id="ENSBTAT00000061124.4">
    <property type="protein sequence ID" value="ENSBTAP00000053328.2"/>
    <property type="gene ID" value="ENSBTAG00000021894.8"/>
</dbReference>
<dbReference type="GeneID" id="515770"/>
<dbReference type="KEGG" id="bta:515770"/>
<dbReference type="CTD" id="5498"/>
<dbReference type="VEuPathDB" id="HostDB:ENSBTAG00000021894"/>
<dbReference type="VGNC" id="VGNC:33219">
    <property type="gene designation" value="PPOX"/>
</dbReference>
<dbReference type="eggNOG" id="KOG1276">
    <property type="taxonomic scope" value="Eukaryota"/>
</dbReference>
<dbReference type="GeneTree" id="ENSGT00390000008744"/>
<dbReference type="HOGENOM" id="CLU_009629_2_1_1"/>
<dbReference type="InParanoid" id="P56602"/>
<dbReference type="OMA" id="WFDQWFG"/>
<dbReference type="OrthoDB" id="419752at2759"/>
<dbReference type="TreeFam" id="TF323479"/>
<dbReference type="Reactome" id="R-BTA-189451">
    <property type="pathway name" value="Heme biosynthesis"/>
</dbReference>
<dbReference type="UniPathway" id="UPA00251">
    <property type="reaction ID" value="UER00324"/>
</dbReference>
<dbReference type="Proteomes" id="UP000009136">
    <property type="component" value="Chromosome 3"/>
</dbReference>
<dbReference type="Bgee" id="ENSBTAG00000021894">
    <property type="expression patterns" value="Expressed in retina and 105 other cell types or tissues"/>
</dbReference>
<dbReference type="GO" id="GO:0005743">
    <property type="term" value="C:mitochondrial inner membrane"/>
    <property type="evidence" value="ECO:0000318"/>
    <property type="project" value="GO_Central"/>
</dbReference>
<dbReference type="GO" id="GO:0005758">
    <property type="term" value="C:mitochondrial intermembrane space"/>
    <property type="evidence" value="ECO:0007669"/>
    <property type="project" value="Ensembl"/>
</dbReference>
<dbReference type="GO" id="GO:0004729">
    <property type="term" value="F:oxygen-dependent protoporphyrinogen oxidase activity"/>
    <property type="evidence" value="ECO:0000318"/>
    <property type="project" value="GO_Central"/>
</dbReference>
<dbReference type="GO" id="GO:0006784">
    <property type="term" value="P:heme A biosynthetic process"/>
    <property type="evidence" value="ECO:0007669"/>
    <property type="project" value="Ensembl"/>
</dbReference>
<dbReference type="GO" id="GO:0006785">
    <property type="term" value="P:heme B biosynthetic process"/>
    <property type="evidence" value="ECO:0007669"/>
    <property type="project" value="Ensembl"/>
</dbReference>
<dbReference type="GO" id="GO:0006783">
    <property type="term" value="P:heme biosynthetic process"/>
    <property type="evidence" value="ECO:0000318"/>
    <property type="project" value="GO_Central"/>
</dbReference>
<dbReference type="GO" id="GO:0048034">
    <property type="term" value="P:heme O biosynthetic process"/>
    <property type="evidence" value="ECO:0007669"/>
    <property type="project" value="Ensembl"/>
</dbReference>
<dbReference type="GO" id="GO:0006782">
    <property type="term" value="P:protoporphyrinogen IX biosynthetic process"/>
    <property type="evidence" value="ECO:0007669"/>
    <property type="project" value="UniProtKB-UniPathway"/>
</dbReference>
<dbReference type="FunFam" id="3.50.50.60:FF:000133">
    <property type="entry name" value="Protoporphyrinogen oxidase"/>
    <property type="match status" value="1"/>
</dbReference>
<dbReference type="Gene3D" id="3.50.50.60">
    <property type="entry name" value="FAD/NAD(P)-binding domain"/>
    <property type="match status" value="1"/>
</dbReference>
<dbReference type="InterPro" id="IPR002937">
    <property type="entry name" value="Amino_oxidase"/>
</dbReference>
<dbReference type="InterPro" id="IPR036188">
    <property type="entry name" value="FAD/NAD-bd_sf"/>
</dbReference>
<dbReference type="InterPro" id="IPR004572">
    <property type="entry name" value="Protoporphyrinogen_oxidase"/>
</dbReference>
<dbReference type="InterPro" id="IPR050464">
    <property type="entry name" value="Zeta_carotene_desat/Oxidored"/>
</dbReference>
<dbReference type="NCBIfam" id="TIGR00562">
    <property type="entry name" value="proto_IX_ox"/>
    <property type="match status" value="1"/>
</dbReference>
<dbReference type="PANTHER" id="PTHR42923">
    <property type="entry name" value="PROTOPORPHYRINOGEN OXIDASE"/>
    <property type="match status" value="1"/>
</dbReference>
<dbReference type="PANTHER" id="PTHR42923:SF3">
    <property type="entry name" value="PROTOPORPHYRINOGEN OXIDASE"/>
    <property type="match status" value="1"/>
</dbReference>
<dbReference type="Pfam" id="PF01593">
    <property type="entry name" value="Amino_oxidase"/>
    <property type="match status" value="1"/>
</dbReference>
<dbReference type="SUPFAM" id="SSF54373">
    <property type="entry name" value="FAD-linked reductases, C-terminal domain"/>
    <property type="match status" value="1"/>
</dbReference>
<dbReference type="SUPFAM" id="SSF51905">
    <property type="entry name" value="FAD/NAD(P)-binding domain"/>
    <property type="match status" value="1"/>
</dbReference>
<name>PPOX_BOVIN</name>
<reference key="1">
    <citation type="journal article" date="2009" name="Genome Biol.">
        <title>A whole-genome assembly of the domestic cow, Bos taurus.</title>
        <authorList>
            <person name="Zimin A.V."/>
            <person name="Delcher A.L."/>
            <person name="Florea L."/>
            <person name="Kelley D.R."/>
            <person name="Schatz M.C."/>
            <person name="Puiu D."/>
            <person name="Hanrahan F."/>
            <person name="Pertea G."/>
            <person name="Van Tassell C.P."/>
            <person name="Sonstegard T.S."/>
            <person name="Marcais G."/>
            <person name="Roberts M."/>
            <person name="Subramanian P."/>
            <person name="Yorke J.A."/>
            <person name="Salzberg S.L."/>
        </authorList>
    </citation>
    <scope>NUCLEOTIDE SEQUENCE [LARGE SCALE GENOMIC DNA]</scope>
    <source>
        <strain>Hereford</strain>
    </source>
</reference>
<reference key="2">
    <citation type="journal article" date="1995" name="Eur. J. Biochem.">
        <title>Induction of terminal enzymes for heme biosynthesis during differentiation of mouse erythroleukemia cells.</title>
        <authorList>
            <person name="Taketani S."/>
            <person name="Yoshinaga T."/>
            <person name="Furukawa T."/>
            <person name="Kohno H."/>
            <person name="Tokunaga R."/>
            <person name="Nishimura K."/>
            <person name="Inokuchi H."/>
        </authorList>
    </citation>
    <scope>PROTEIN SEQUENCE OF 2-14 AND 164-178</scope>
    <scope>FUNCTION</scope>
    <scope>CATALYTIC ACTIVITY</scope>
    <scope>SUBCELLULAR LOCATION</scope>
    <scope>TISSUE SPECIFICITY</scope>
    <source>
        <tissue>Liver</tissue>
    </source>
</reference>
<gene>
    <name type="primary">PPOX</name>
</gene>
<organism>
    <name type="scientific">Bos taurus</name>
    <name type="common">Bovine</name>
    <dbReference type="NCBI Taxonomy" id="9913"/>
    <lineage>
        <taxon>Eukaryota</taxon>
        <taxon>Metazoa</taxon>
        <taxon>Chordata</taxon>
        <taxon>Craniata</taxon>
        <taxon>Vertebrata</taxon>
        <taxon>Euteleostomi</taxon>
        <taxon>Mammalia</taxon>
        <taxon>Eutheria</taxon>
        <taxon>Laurasiatheria</taxon>
        <taxon>Artiodactyla</taxon>
        <taxon>Ruminantia</taxon>
        <taxon>Pecora</taxon>
        <taxon>Bovidae</taxon>
        <taxon>Bovinae</taxon>
        <taxon>Bos</taxon>
    </lineage>
</organism>
<comment type="function">
    <text evidence="3">Catalyzes the 6-electron oxidation of protoporphyrinogen-IX to form protoporphyrin-IX.</text>
</comment>
<comment type="catalytic activity">
    <reaction evidence="3">
        <text>protoporphyrinogen IX + 3 O2 = protoporphyrin IX + 3 H2O2</text>
        <dbReference type="Rhea" id="RHEA:25576"/>
        <dbReference type="ChEBI" id="CHEBI:15379"/>
        <dbReference type="ChEBI" id="CHEBI:16240"/>
        <dbReference type="ChEBI" id="CHEBI:57306"/>
        <dbReference type="ChEBI" id="CHEBI:57307"/>
        <dbReference type="EC" id="1.3.3.4"/>
    </reaction>
</comment>
<comment type="cofactor">
    <cofactor evidence="1">
        <name>FAD</name>
        <dbReference type="ChEBI" id="CHEBI:57692"/>
    </cofactor>
    <text evidence="1">Binds 1 FAD per subunit.</text>
</comment>
<comment type="pathway">
    <text evidence="3">Porphyrin-containing compound metabolism; protoporphyrin-IX biosynthesis; protoporphyrin-IX from protoporphyrinogen-IX: step 1/1.</text>
</comment>
<comment type="subunit">
    <text evidence="1">Monomer. Homodimer.</text>
</comment>
<comment type="subcellular location">
    <subcellularLocation>
        <location evidence="2">Mitochondrion inner membrane</location>
        <topology evidence="2">Peripheral membrane protein</topology>
        <orientation evidence="2">Intermembrane side</orientation>
    </subcellularLocation>
</comment>
<comment type="tissue specificity">
    <text evidence="3">Detected in liver (at protein level).</text>
</comment>
<comment type="similarity">
    <text evidence="4">Belongs to the protoporphyrinogen/coproporphyrinogen oxidase family. Protoporphyrinogen oxidase subfamily.</text>
</comment>
<accession>P56602</accession>
<accession>E1BPX0</accession>
<protein>
    <recommendedName>
        <fullName>Protoporphyrinogen oxidase</fullName>
        <shortName>PPO</shortName>
        <ecNumber>1.3.3.4</ecNumber>
    </recommendedName>
</protein>
<keyword id="KW-0903">Direct protein sequencing</keyword>
<keyword id="KW-0274">FAD</keyword>
<keyword id="KW-0285">Flavoprotein</keyword>
<keyword id="KW-0350">Heme biosynthesis</keyword>
<keyword id="KW-0472">Membrane</keyword>
<keyword id="KW-0496">Mitochondrion</keyword>
<keyword id="KW-0999">Mitochondrion inner membrane</keyword>
<keyword id="KW-0560">Oxidoreductase</keyword>
<keyword id="KW-0627">Porphyrin biosynthesis</keyword>
<keyword id="KW-1185">Reference proteome</keyword>